<accession>A9R8J0</accession>
<dbReference type="EMBL" id="CP000901">
    <property type="protein sequence ID" value="ABX88110.1"/>
    <property type="molecule type" value="Genomic_DNA"/>
</dbReference>
<dbReference type="RefSeq" id="WP_002211978.1">
    <property type="nucleotide sequence ID" value="NZ_CP009935.1"/>
</dbReference>
<dbReference type="GeneID" id="57974847"/>
<dbReference type="KEGG" id="ypg:YpAngola_A0522"/>
<dbReference type="PATRIC" id="fig|349746.12.peg.1472"/>
<dbReference type="UniPathway" id="UPA00566"/>
<dbReference type="GO" id="GO:0005886">
    <property type="term" value="C:plasma membrane"/>
    <property type="evidence" value="ECO:0007669"/>
    <property type="project" value="UniProtKB-SubCell"/>
</dbReference>
<dbReference type="GO" id="GO:0009246">
    <property type="term" value="P:enterobacterial common antigen biosynthetic process"/>
    <property type="evidence" value="ECO:0007669"/>
    <property type="project" value="UniProtKB-UniRule"/>
</dbReference>
<dbReference type="HAMAP" id="MF_01003">
    <property type="entry name" value="WzyE"/>
    <property type="match status" value="1"/>
</dbReference>
<dbReference type="InterPro" id="IPR010691">
    <property type="entry name" value="WzyE"/>
</dbReference>
<dbReference type="NCBIfam" id="NF002820">
    <property type="entry name" value="PRK02975.1"/>
    <property type="match status" value="1"/>
</dbReference>
<dbReference type="Pfam" id="PF06899">
    <property type="entry name" value="WzyE"/>
    <property type="match status" value="1"/>
</dbReference>
<name>WZYE_YERPG</name>
<gene>
    <name evidence="1" type="primary">wzyE</name>
    <name type="ordered locus">YpAngola_A0522</name>
</gene>
<organism>
    <name type="scientific">Yersinia pestis bv. Antiqua (strain Angola)</name>
    <dbReference type="NCBI Taxonomy" id="349746"/>
    <lineage>
        <taxon>Bacteria</taxon>
        <taxon>Pseudomonadati</taxon>
        <taxon>Pseudomonadota</taxon>
        <taxon>Gammaproteobacteria</taxon>
        <taxon>Enterobacterales</taxon>
        <taxon>Yersiniaceae</taxon>
        <taxon>Yersinia</taxon>
    </lineage>
</organism>
<proteinExistence type="inferred from homology"/>
<comment type="function">
    <text evidence="1">Probably involved in the polymerization of enterobacterial common antigen (ECA) trisaccharide repeat units.</text>
</comment>
<comment type="pathway">
    <text evidence="1">Bacterial outer membrane biogenesis; enterobacterial common antigen biosynthesis.</text>
</comment>
<comment type="subunit">
    <text evidence="1">Probably part of a complex composed of WzxE, WzyE and WzzE.</text>
</comment>
<comment type="subcellular location">
    <subcellularLocation>
        <location evidence="1">Cell inner membrane</location>
        <topology evidence="1">Multi-pass membrane protein</topology>
    </subcellularLocation>
</comment>
<comment type="similarity">
    <text evidence="1">Belongs to the WzyE family.</text>
</comment>
<evidence type="ECO:0000255" key="1">
    <source>
        <dbReference type="HAMAP-Rule" id="MF_01003"/>
    </source>
</evidence>
<protein>
    <recommendedName>
        <fullName evidence="1">Probable ECA polymerase</fullName>
    </recommendedName>
</protein>
<reference key="1">
    <citation type="journal article" date="2010" name="J. Bacteriol.">
        <title>Genome sequence of the deep-rooted Yersinia pestis strain Angola reveals new insights into the evolution and pangenome of the plague bacterium.</title>
        <authorList>
            <person name="Eppinger M."/>
            <person name="Worsham P.L."/>
            <person name="Nikolich M.P."/>
            <person name="Riley D.R."/>
            <person name="Sebastian Y."/>
            <person name="Mou S."/>
            <person name="Achtman M."/>
            <person name="Lindler L.E."/>
            <person name="Ravel J."/>
        </authorList>
    </citation>
    <scope>NUCLEOTIDE SEQUENCE [LARGE SCALE GENOMIC DNA]</scope>
    <source>
        <strain>Angola</strain>
    </source>
</reference>
<sequence length="454" mass="51653">MTLGQFGGLFCIYLIAVIFILTLTYQEFRRVKFNFNVLFSMLYLLTFYFGFPLTCMLVFQFGVAVVPVEYLLYAMLSATAFYGIYYVTYKTRLRQPRSQPRTPIFTMNRVETNLTWVLLALVAVGTVGIFFMQNGFLLFKLDSYSKIFSSDVSGVALKRFFYFFIPAMLVVYFLKQDRRAWFFFLASTVAFGILTYVIVGGTRANIIIAFSLFLFIGIVRGWITLWMLAAAGVFGIVGMFWLALKRYGLDVNGAEAFYTFLYLTRDTFSPWENLGLLLQNYDKIDFQGLAPIVRDFYVFIPSALWPERPDLVLNTANYFTWDVLDNHSGLAISPTLIGSLVVMGGVLFIPLGAIVVGLIIKWFDWLYEQGKAESNRYKAAILQSFCFGAVFNIIVLAREGLDSFVSRVVFFCVIFGACLVLAKLLYWLFDTAGLIKRQGIKSNRLSTPNAGNQL</sequence>
<keyword id="KW-0997">Cell inner membrane</keyword>
<keyword id="KW-1003">Cell membrane</keyword>
<keyword id="KW-0472">Membrane</keyword>
<keyword id="KW-0812">Transmembrane</keyword>
<keyword id="KW-1133">Transmembrane helix</keyword>
<feature type="chain" id="PRO_1000200221" description="Probable ECA polymerase">
    <location>
        <begin position="1"/>
        <end position="454"/>
    </location>
</feature>
<feature type="transmembrane region" description="Helical" evidence="1">
    <location>
        <begin position="3"/>
        <end position="23"/>
    </location>
</feature>
<feature type="transmembrane region" description="Helical" evidence="1">
    <location>
        <begin position="39"/>
        <end position="59"/>
    </location>
</feature>
<feature type="transmembrane region" description="Helical" evidence="1">
    <location>
        <begin position="61"/>
        <end position="81"/>
    </location>
</feature>
<feature type="transmembrane region" description="Helical" evidence="1">
    <location>
        <begin position="119"/>
        <end position="139"/>
    </location>
</feature>
<feature type="transmembrane region" description="Helical" evidence="1">
    <location>
        <begin position="154"/>
        <end position="174"/>
    </location>
</feature>
<feature type="transmembrane region" description="Helical" evidence="1">
    <location>
        <begin position="180"/>
        <end position="200"/>
    </location>
</feature>
<feature type="transmembrane region" description="Helical" evidence="1">
    <location>
        <begin position="201"/>
        <end position="221"/>
    </location>
</feature>
<feature type="transmembrane region" description="Helical" evidence="1">
    <location>
        <begin position="222"/>
        <end position="242"/>
    </location>
</feature>
<feature type="transmembrane region" description="Helical" evidence="1">
    <location>
        <begin position="340"/>
        <end position="360"/>
    </location>
</feature>
<feature type="transmembrane region" description="Helical" evidence="1">
    <location>
        <begin position="377"/>
        <end position="397"/>
    </location>
</feature>
<feature type="transmembrane region" description="Helical" evidence="1">
    <location>
        <begin position="409"/>
        <end position="429"/>
    </location>
</feature>